<proteinExistence type="inferred from homology"/>
<feature type="chain" id="PRO_0000151872" description="ATP phosphoribosyltransferase">
    <location>
        <begin position="1"/>
        <end position="298"/>
    </location>
</feature>
<name>HIS1_VIBVY</name>
<reference key="1">
    <citation type="journal article" date="2003" name="Genome Res.">
        <title>Comparative genome analysis of Vibrio vulnificus, a marine pathogen.</title>
        <authorList>
            <person name="Chen C.-Y."/>
            <person name="Wu K.-M."/>
            <person name="Chang Y.-C."/>
            <person name="Chang C.-H."/>
            <person name="Tsai H.-C."/>
            <person name="Liao T.-L."/>
            <person name="Liu Y.-M."/>
            <person name="Chen H.-J."/>
            <person name="Shen A.B.-T."/>
            <person name="Li J.-C."/>
            <person name="Su T.-L."/>
            <person name="Shao C.-P."/>
            <person name="Lee C.-T."/>
            <person name="Hor L.-I."/>
            <person name="Tsai S.-F."/>
        </authorList>
    </citation>
    <scope>NUCLEOTIDE SEQUENCE [LARGE SCALE GENOMIC DNA]</scope>
    <source>
        <strain>YJ016</strain>
    </source>
</reference>
<comment type="function">
    <text evidence="1">Catalyzes the condensation of ATP and 5-phosphoribose 1-diphosphate to form N'-(5'-phosphoribosyl)-ATP (PR-ATP). Has a crucial role in the pathway because the rate of histidine biosynthesis seems to be controlled primarily by regulation of HisG enzymatic activity.</text>
</comment>
<comment type="catalytic activity">
    <reaction evidence="1">
        <text>1-(5-phospho-beta-D-ribosyl)-ATP + diphosphate = 5-phospho-alpha-D-ribose 1-diphosphate + ATP</text>
        <dbReference type="Rhea" id="RHEA:18473"/>
        <dbReference type="ChEBI" id="CHEBI:30616"/>
        <dbReference type="ChEBI" id="CHEBI:33019"/>
        <dbReference type="ChEBI" id="CHEBI:58017"/>
        <dbReference type="ChEBI" id="CHEBI:73183"/>
        <dbReference type="EC" id="2.4.2.17"/>
    </reaction>
</comment>
<comment type="cofactor">
    <cofactor evidence="1">
        <name>Mg(2+)</name>
        <dbReference type="ChEBI" id="CHEBI:18420"/>
    </cofactor>
</comment>
<comment type="activity regulation">
    <text evidence="1">Feedback inhibited by histidine.</text>
</comment>
<comment type="pathway">
    <text evidence="1">Amino-acid biosynthesis; L-histidine biosynthesis; L-histidine from 5-phospho-alpha-D-ribose 1-diphosphate: step 1/9.</text>
</comment>
<comment type="subcellular location">
    <subcellularLocation>
        <location evidence="1">Cytoplasm</location>
    </subcellularLocation>
</comment>
<comment type="similarity">
    <text evidence="1">Belongs to the ATP phosphoribosyltransferase family. Long subfamily.</text>
</comment>
<protein>
    <recommendedName>
        <fullName evidence="1">ATP phosphoribosyltransferase</fullName>
        <shortName evidence="1">ATP-PRT</shortName>
        <shortName evidence="1">ATP-PRTase</shortName>
        <ecNumber evidence="1">2.4.2.17</ecNumber>
    </recommendedName>
</protein>
<accession>Q7MLS7</accession>
<keyword id="KW-0028">Amino-acid biosynthesis</keyword>
<keyword id="KW-0067">ATP-binding</keyword>
<keyword id="KW-0963">Cytoplasm</keyword>
<keyword id="KW-0328">Glycosyltransferase</keyword>
<keyword id="KW-0368">Histidine biosynthesis</keyword>
<keyword id="KW-0460">Magnesium</keyword>
<keyword id="KW-0479">Metal-binding</keyword>
<keyword id="KW-0547">Nucleotide-binding</keyword>
<keyword id="KW-0808">Transferase</keyword>
<dbReference type="EC" id="2.4.2.17" evidence="1"/>
<dbReference type="EMBL" id="BA000037">
    <property type="protein sequence ID" value="BAC94114.1"/>
    <property type="molecule type" value="Genomic_DNA"/>
</dbReference>
<dbReference type="RefSeq" id="WP_011080740.1">
    <property type="nucleotide sequence ID" value="NC_005139.1"/>
</dbReference>
<dbReference type="SMR" id="Q7MLS7"/>
<dbReference type="STRING" id="672.VV93_v1c12630"/>
<dbReference type="KEGG" id="vvy:VV1350"/>
<dbReference type="eggNOG" id="COG0040">
    <property type="taxonomic scope" value="Bacteria"/>
</dbReference>
<dbReference type="HOGENOM" id="CLU_038115_1_0_6"/>
<dbReference type="UniPathway" id="UPA00031">
    <property type="reaction ID" value="UER00006"/>
</dbReference>
<dbReference type="Proteomes" id="UP000002675">
    <property type="component" value="Chromosome I"/>
</dbReference>
<dbReference type="GO" id="GO:0005737">
    <property type="term" value="C:cytoplasm"/>
    <property type="evidence" value="ECO:0007669"/>
    <property type="project" value="UniProtKB-SubCell"/>
</dbReference>
<dbReference type="GO" id="GO:0005524">
    <property type="term" value="F:ATP binding"/>
    <property type="evidence" value="ECO:0007669"/>
    <property type="project" value="UniProtKB-KW"/>
</dbReference>
<dbReference type="GO" id="GO:0003879">
    <property type="term" value="F:ATP phosphoribosyltransferase activity"/>
    <property type="evidence" value="ECO:0007669"/>
    <property type="project" value="UniProtKB-UniRule"/>
</dbReference>
<dbReference type="GO" id="GO:0000287">
    <property type="term" value="F:magnesium ion binding"/>
    <property type="evidence" value="ECO:0007669"/>
    <property type="project" value="UniProtKB-UniRule"/>
</dbReference>
<dbReference type="GO" id="GO:0000105">
    <property type="term" value="P:L-histidine biosynthetic process"/>
    <property type="evidence" value="ECO:0007669"/>
    <property type="project" value="UniProtKB-UniRule"/>
</dbReference>
<dbReference type="CDD" id="cd13592">
    <property type="entry name" value="PBP2_HisGL2"/>
    <property type="match status" value="1"/>
</dbReference>
<dbReference type="FunFam" id="3.30.70.120:FF:000002">
    <property type="entry name" value="ATP phosphoribosyltransferase"/>
    <property type="match status" value="1"/>
</dbReference>
<dbReference type="FunFam" id="3.40.190.10:FF:000008">
    <property type="entry name" value="ATP phosphoribosyltransferase"/>
    <property type="match status" value="1"/>
</dbReference>
<dbReference type="Gene3D" id="3.30.70.120">
    <property type="match status" value="1"/>
</dbReference>
<dbReference type="Gene3D" id="3.40.190.10">
    <property type="entry name" value="Periplasmic binding protein-like II"/>
    <property type="match status" value="2"/>
</dbReference>
<dbReference type="HAMAP" id="MF_00079">
    <property type="entry name" value="HisG_Long"/>
    <property type="match status" value="1"/>
</dbReference>
<dbReference type="InterPro" id="IPR020621">
    <property type="entry name" value="ATP-PRT_HisG_long"/>
</dbReference>
<dbReference type="InterPro" id="IPR013820">
    <property type="entry name" value="ATP_PRibTrfase_cat"/>
</dbReference>
<dbReference type="InterPro" id="IPR018198">
    <property type="entry name" value="ATP_PRibTrfase_CS"/>
</dbReference>
<dbReference type="InterPro" id="IPR001348">
    <property type="entry name" value="ATP_PRibTrfase_HisG"/>
</dbReference>
<dbReference type="InterPro" id="IPR013115">
    <property type="entry name" value="HisG_C"/>
</dbReference>
<dbReference type="InterPro" id="IPR011322">
    <property type="entry name" value="N-reg_PII-like_a/b"/>
</dbReference>
<dbReference type="InterPro" id="IPR015867">
    <property type="entry name" value="N-reg_PII/ATP_PRibTrfase_C"/>
</dbReference>
<dbReference type="NCBIfam" id="TIGR00070">
    <property type="entry name" value="hisG"/>
    <property type="match status" value="1"/>
</dbReference>
<dbReference type="NCBIfam" id="TIGR03455">
    <property type="entry name" value="HisG_C-term"/>
    <property type="match status" value="1"/>
</dbReference>
<dbReference type="PANTHER" id="PTHR21403:SF8">
    <property type="entry name" value="ATP PHOSPHORIBOSYLTRANSFERASE"/>
    <property type="match status" value="1"/>
</dbReference>
<dbReference type="PANTHER" id="PTHR21403">
    <property type="entry name" value="ATP PHOSPHORIBOSYLTRANSFERASE ATP-PRTASE"/>
    <property type="match status" value="1"/>
</dbReference>
<dbReference type="Pfam" id="PF01634">
    <property type="entry name" value="HisG"/>
    <property type="match status" value="1"/>
</dbReference>
<dbReference type="Pfam" id="PF08029">
    <property type="entry name" value="HisG_C"/>
    <property type="match status" value="1"/>
</dbReference>
<dbReference type="SUPFAM" id="SSF54913">
    <property type="entry name" value="GlnB-like"/>
    <property type="match status" value="1"/>
</dbReference>
<dbReference type="SUPFAM" id="SSF53850">
    <property type="entry name" value="Periplasmic binding protein-like II"/>
    <property type="match status" value="1"/>
</dbReference>
<dbReference type="PROSITE" id="PS01316">
    <property type="entry name" value="ATP_P_PHORIBOSYLTR"/>
    <property type="match status" value="1"/>
</dbReference>
<evidence type="ECO:0000255" key="1">
    <source>
        <dbReference type="HAMAP-Rule" id="MF_00079"/>
    </source>
</evidence>
<gene>
    <name evidence="1" type="primary">hisG</name>
    <name type="ordered locus">VV1350</name>
</gene>
<organism>
    <name type="scientific">Vibrio vulnificus (strain YJ016)</name>
    <dbReference type="NCBI Taxonomy" id="196600"/>
    <lineage>
        <taxon>Bacteria</taxon>
        <taxon>Pseudomonadati</taxon>
        <taxon>Pseudomonadota</taxon>
        <taxon>Gammaproteobacteria</taxon>
        <taxon>Vibrionales</taxon>
        <taxon>Vibrionaceae</taxon>
        <taxon>Vibrio</taxon>
    </lineage>
</organism>
<sequence>MQTQRLRIAIQKKGRLSEECQGLLKKCGVKFNIMGERLVVHSENMPIDLLLVRDDDIPGLIMDGVVDLGFIGENVLEEVRLERKATGDACQFETLSRLDFGGCRLSIAIDKDEKYNGPQDLAGKRIATTYPQLLKAYMDRQGVPFSTCMLTGSVEVAPRAGLADAIADLVSTGATLEANGLKEAEVIFQSKATLIQRSGEFAQDKQALIEKLLTRMQGVQQAKESKYIMLHAPVDKLEQIKALLPGAEDPTVLPLSAEKQRVAVHLVSTENLFWETMEQLKELGASSILVLPIEKMME</sequence>